<accession>A4JG35</accession>
<evidence type="ECO:0000255" key="1">
    <source>
        <dbReference type="HAMAP-Rule" id="MF_00686"/>
    </source>
</evidence>
<reference key="1">
    <citation type="submission" date="2007-03" db="EMBL/GenBank/DDBJ databases">
        <title>Complete sequence of chromosome 1 of Burkholderia vietnamiensis G4.</title>
        <authorList>
            <consortium name="US DOE Joint Genome Institute"/>
            <person name="Copeland A."/>
            <person name="Lucas S."/>
            <person name="Lapidus A."/>
            <person name="Barry K."/>
            <person name="Detter J.C."/>
            <person name="Glavina del Rio T."/>
            <person name="Hammon N."/>
            <person name="Israni S."/>
            <person name="Dalin E."/>
            <person name="Tice H."/>
            <person name="Pitluck S."/>
            <person name="Chain P."/>
            <person name="Malfatti S."/>
            <person name="Shin M."/>
            <person name="Vergez L."/>
            <person name="Schmutz J."/>
            <person name="Larimer F."/>
            <person name="Land M."/>
            <person name="Hauser L."/>
            <person name="Kyrpides N."/>
            <person name="Tiedje J."/>
            <person name="Richardson P."/>
        </authorList>
    </citation>
    <scope>NUCLEOTIDE SEQUENCE [LARGE SCALE GENOMIC DNA]</scope>
    <source>
        <strain>G4 / LMG 22486</strain>
    </source>
</reference>
<feature type="chain" id="PRO_1000045027" description="Probable Fe(2+)-trafficking protein">
    <location>
        <begin position="1"/>
        <end position="91"/>
    </location>
</feature>
<organism>
    <name type="scientific">Burkholderia vietnamiensis (strain G4 / LMG 22486)</name>
    <name type="common">Burkholderia cepacia (strain R1808)</name>
    <dbReference type="NCBI Taxonomy" id="269482"/>
    <lineage>
        <taxon>Bacteria</taxon>
        <taxon>Pseudomonadati</taxon>
        <taxon>Pseudomonadota</taxon>
        <taxon>Betaproteobacteria</taxon>
        <taxon>Burkholderiales</taxon>
        <taxon>Burkholderiaceae</taxon>
        <taxon>Burkholderia</taxon>
        <taxon>Burkholderia cepacia complex</taxon>
    </lineage>
</organism>
<protein>
    <recommendedName>
        <fullName evidence="1">Probable Fe(2+)-trafficking protein</fullName>
    </recommendedName>
</protein>
<dbReference type="EMBL" id="CP000614">
    <property type="protein sequence ID" value="ABO55238.1"/>
    <property type="molecule type" value="Genomic_DNA"/>
</dbReference>
<dbReference type="SMR" id="A4JG35"/>
<dbReference type="KEGG" id="bvi:Bcep1808_2236"/>
<dbReference type="eggNOG" id="COG2924">
    <property type="taxonomic scope" value="Bacteria"/>
</dbReference>
<dbReference type="HOGENOM" id="CLU_170994_0_0_4"/>
<dbReference type="Proteomes" id="UP000002287">
    <property type="component" value="Chromosome 1"/>
</dbReference>
<dbReference type="GO" id="GO:0005829">
    <property type="term" value="C:cytosol"/>
    <property type="evidence" value="ECO:0007669"/>
    <property type="project" value="TreeGrafter"/>
</dbReference>
<dbReference type="GO" id="GO:0005506">
    <property type="term" value="F:iron ion binding"/>
    <property type="evidence" value="ECO:0007669"/>
    <property type="project" value="UniProtKB-UniRule"/>
</dbReference>
<dbReference type="GO" id="GO:0034599">
    <property type="term" value="P:cellular response to oxidative stress"/>
    <property type="evidence" value="ECO:0007669"/>
    <property type="project" value="TreeGrafter"/>
</dbReference>
<dbReference type="FunFam" id="1.10.3880.10:FF:000001">
    <property type="entry name" value="Probable Fe(2+)-trafficking protein"/>
    <property type="match status" value="1"/>
</dbReference>
<dbReference type="Gene3D" id="1.10.3880.10">
    <property type="entry name" value="Fe(II) trafficking protein YggX"/>
    <property type="match status" value="1"/>
</dbReference>
<dbReference type="HAMAP" id="MF_00686">
    <property type="entry name" value="Fe_traffic_YggX"/>
    <property type="match status" value="1"/>
</dbReference>
<dbReference type="InterPro" id="IPR007457">
    <property type="entry name" value="Fe_traffick_prot_YggX"/>
</dbReference>
<dbReference type="InterPro" id="IPR036766">
    <property type="entry name" value="Fe_traffick_prot_YggX_sf"/>
</dbReference>
<dbReference type="NCBIfam" id="NF003817">
    <property type="entry name" value="PRK05408.1"/>
    <property type="match status" value="1"/>
</dbReference>
<dbReference type="PANTHER" id="PTHR36965">
    <property type="entry name" value="FE(2+)-TRAFFICKING PROTEIN-RELATED"/>
    <property type="match status" value="1"/>
</dbReference>
<dbReference type="PANTHER" id="PTHR36965:SF1">
    <property type="entry name" value="FE(2+)-TRAFFICKING PROTEIN-RELATED"/>
    <property type="match status" value="1"/>
</dbReference>
<dbReference type="Pfam" id="PF04362">
    <property type="entry name" value="Iron_traffic"/>
    <property type="match status" value="1"/>
</dbReference>
<dbReference type="PIRSF" id="PIRSF029827">
    <property type="entry name" value="Fe_traffic_YggX"/>
    <property type="match status" value="1"/>
</dbReference>
<dbReference type="SUPFAM" id="SSF111148">
    <property type="entry name" value="YggX-like"/>
    <property type="match status" value="1"/>
</dbReference>
<keyword id="KW-0408">Iron</keyword>
<comment type="function">
    <text evidence="1">Could be a mediator in iron transactions between iron acquisition and iron-requiring processes, such as synthesis and/or repair of Fe-S clusters in biosynthetic enzymes.</text>
</comment>
<comment type="similarity">
    <text evidence="1">Belongs to the Fe(2+)-trafficking protein family.</text>
</comment>
<gene>
    <name type="ordered locus">Bcep1808_2236</name>
</gene>
<name>FETP_BURVG</name>
<proteinExistence type="inferred from homology"/>
<sequence length="91" mass="10327">MARMIQCAKLGKEAEGLDFPPLPGELGKRIYESVSKEAWQGWLKQQTMLINENRLNMADPRARQYLMKQTEKYFFGDGADQASGYVPPTEG</sequence>